<protein>
    <recommendedName>
        <fullName>Transcription elongation factor SPT6</fullName>
    </recommendedName>
    <alternativeName>
        <fullName>Chromatin elongation factor SPT6</fullName>
    </alternativeName>
</protein>
<accession>Q4PI89</accession>
<accession>A0A0D1E757</accession>
<evidence type="ECO:0000250" key="1">
    <source>
        <dbReference type="UniProtKB" id="P23615"/>
    </source>
</evidence>
<evidence type="ECO:0000256" key="2">
    <source>
        <dbReference type="SAM" id="MobiDB-lite"/>
    </source>
</evidence>
<evidence type="ECO:0000305" key="3"/>
<feature type="chain" id="PRO_0000238579" description="Transcription elongation factor SPT6">
    <location>
        <begin position="1"/>
        <end position="1723"/>
    </location>
</feature>
<feature type="domain" description="SH2">
    <location>
        <begin position="1363"/>
        <end position="1445"/>
    </location>
</feature>
<feature type="region of interest" description="Disordered" evidence="2">
    <location>
        <begin position="1"/>
        <end position="247"/>
    </location>
</feature>
<feature type="region of interest" description="Disordered" evidence="2">
    <location>
        <begin position="1632"/>
        <end position="1723"/>
    </location>
</feature>
<feature type="compositionally biased region" description="Acidic residues" evidence="2">
    <location>
        <begin position="13"/>
        <end position="26"/>
    </location>
</feature>
<feature type="compositionally biased region" description="Acidic residues" evidence="2">
    <location>
        <begin position="43"/>
        <end position="54"/>
    </location>
</feature>
<feature type="compositionally biased region" description="Acidic residues" evidence="2">
    <location>
        <begin position="64"/>
        <end position="75"/>
    </location>
</feature>
<feature type="compositionally biased region" description="Basic residues" evidence="2">
    <location>
        <begin position="80"/>
        <end position="90"/>
    </location>
</feature>
<feature type="compositionally biased region" description="Acidic residues" evidence="2">
    <location>
        <begin position="94"/>
        <end position="105"/>
    </location>
</feature>
<feature type="compositionally biased region" description="Acidic residues" evidence="2">
    <location>
        <begin position="147"/>
        <end position="157"/>
    </location>
</feature>
<feature type="compositionally biased region" description="Acidic residues" evidence="2">
    <location>
        <begin position="196"/>
        <end position="221"/>
    </location>
</feature>
<feature type="compositionally biased region" description="Basic and acidic residues" evidence="2">
    <location>
        <begin position="222"/>
        <end position="234"/>
    </location>
</feature>
<feature type="compositionally biased region" description="Pro residues" evidence="2">
    <location>
        <begin position="1639"/>
        <end position="1653"/>
    </location>
</feature>
<feature type="compositionally biased region" description="Low complexity" evidence="2">
    <location>
        <begin position="1663"/>
        <end position="1672"/>
    </location>
</feature>
<feature type="compositionally biased region" description="Pro residues" evidence="2">
    <location>
        <begin position="1675"/>
        <end position="1685"/>
    </location>
</feature>
<feature type="compositionally biased region" description="Gly residues" evidence="2">
    <location>
        <begin position="1709"/>
        <end position="1723"/>
    </location>
</feature>
<sequence length="1723" mass="193945">MADEERVPAPYFQDDEEGGASDEGEGVDLIKSHGNLVGSGGEDSSDEEEDDDPEEARRVAEGFIAEDDEEEEEDSEARRDRRRRRKKKRKQNEQDFEVDEDDLELLAENTGQPRRKEAGRLKRFRRGSASPPADDEAAARQRTLDQIFEDDDEDEDDIRSGRRGVNYDDDDEDLPSVGQALRAGVARKQREVVGAYEDDGLDDFIEEDEDDEEMQGLDEEEREARRQQRREEKRKARLSGSAADPAKAGIDHEAWDEIHEIFGNGEDYFWALEDEEEDAFDEEKKNKMEYKDIFEPAQIAERMLTEDDERIKRIDIPERLQLACPGEEGLKLLERKLTDTELFEAAKWASTRISQRTAAEFLDEAGLFHRQRSEFINAVQLMLSYMLNDLLEVPFLFQHRFDELEHLTFDEVERQYRSIDLLTRRELYTLSGLGLKFKTLLVRKDQLRATFNKIHVDVKTEPIQDDELDGGLDAMPADESRAARVESSQRQRAIFEDMLAQAASLEEISDITEYLTLRYGQQMRDAQALTSNGTDQAASDLQGLTLTSDPLVSATPAFKKPSLVGQYERNKKTVLAELAKKFGITSDELASNVTSHTRQYSPRDPEESPFKFAEQFTGSAWGAHSPEIALAKAKMMLSQEIGKDPILKREMRQLFKDAAEINIEPTERGMTVIDDQHPYANFKFIANKPARLVPQNPSQYLQMLQAEDELLIKLDIDLKDVVLTRFEARLYNNYASEGVGELSNAWNEQRRDVIREALKTHLVPNGRIWLKEFLREESRETLLRHVDVLMTKRVQEGPFMSKSMMARNRDPKIEEEDRIPRVLAVSHGGGDPRKDVVQAVYLDERGRFREHATFDDLRPLSARQMQERELELERTRGKAEFVDHRADFVKLLKQRRPDIVVVSGWSVRTAELKRHVQELADTAHQEICDADRLHSDLERDQAVIDVVTCHDDVARIYQHSSRAAEEFPELSELGRYCLALARYAQSPVNEFAALGSDLTAVILDPNQRLLPQDRLRLHFERCIGAVVNENGVEINQAMTSTYLQTMLPFVAGLGPRKAHALVNAISTKLEGTLINRTLLISRNILTFQVFQNCASFLRIEQDMLLEADEDDVPDVLDSTRIHPEDYDFPRKMAADALNKHEEDLEGEHPSLPCKELMEDADPADKLNTLDLDNYATMLFERKGERKRATLHSCRTELIKPYDDLREKQSEPSLEEMLTMFTGETSKTLAEGFVVSVEVTRVQEGNRMQEGHIKCRLDSGIEGTIEAEHAVEHYTPGSVRLRDLVRPQQTLDALVRKIDYKMCTVQLSISPWELQHRATHQGKTPIDIKFYDRRKADQWNEHAAAKAKLRIQARRQNRVIDHPNYHNFNYKAAVTFLRSQPRGTVVVRPSSKGDDHLAVTWKVDDDVYQNIDVTELDKESEYSLGRVLRIEGMGSYSDLDELIVNHVKPMVHMVEMMMNHEKYKGADEEDLHRFLTNWSLANPSRSVYAFGLNKDRPGYFNLSFKANRDAAIQTWPVKVLPNAFKLGPADQLADVAALCNAFKTQYTTQASMARGAKTPYGGGRTPAPGMGGATPLGGRTPYGGVRNGMAGSATPGQGVAGGYTTPMINVASATPNPYGGAYGRNGAAGGYGAPAAGGPPGRPPSMPGAPPMMPPGMASGGGAPSYAPPFAGAGEPGPPPARPPVPHGMHPDRFAQAEYGGASQQSYGENSGGAGGYGGGYRGY</sequence>
<keyword id="KW-0158">Chromosome</keyword>
<keyword id="KW-0539">Nucleus</keyword>
<keyword id="KW-1185">Reference proteome</keyword>
<keyword id="KW-0727">SH2 domain</keyword>
<keyword id="KW-0804">Transcription</keyword>
<dbReference type="EMBL" id="CM003140">
    <property type="protein sequence ID" value="KIS71739.1"/>
    <property type="molecule type" value="Genomic_DNA"/>
</dbReference>
<dbReference type="RefSeq" id="XP_011386117.1">
    <property type="nucleotide sequence ID" value="XM_011387815.1"/>
</dbReference>
<dbReference type="SMR" id="Q4PI89"/>
<dbReference type="FunCoup" id="Q4PI89">
    <property type="interactions" value="773"/>
</dbReference>
<dbReference type="STRING" id="237631.Q4PI89"/>
<dbReference type="EnsemblFungi" id="KIS71739">
    <property type="protein sequence ID" value="KIS71739"/>
    <property type="gene ID" value="UMAG_00174"/>
</dbReference>
<dbReference type="GeneID" id="23561550"/>
<dbReference type="KEGG" id="uma:UMAG_00174"/>
<dbReference type="VEuPathDB" id="FungiDB:UMAG_00174"/>
<dbReference type="eggNOG" id="KOG1856">
    <property type="taxonomic scope" value="Eukaryota"/>
</dbReference>
<dbReference type="HOGENOM" id="CLU_001680_0_1_1"/>
<dbReference type="InParanoid" id="Q4PI89"/>
<dbReference type="OMA" id="GYFYLCF"/>
<dbReference type="OrthoDB" id="995477at2759"/>
<dbReference type="Proteomes" id="UP000000561">
    <property type="component" value="Chromosome 1"/>
</dbReference>
<dbReference type="GO" id="GO:0008023">
    <property type="term" value="C:transcription elongation factor complex"/>
    <property type="evidence" value="ECO:0000318"/>
    <property type="project" value="GO_Central"/>
</dbReference>
<dbReference type="GO" id="GO:0003677">
    <property type="term" value="F:DNA binding"/>
    <property type="evidence" value="ECO:0007669"/>
    <property type="project" value="InterPro"/>
</dbReference>
<dbReference type="GO" id="GO:0042393">
    <property type="term" value="F:histone binding"/>
    <property type="evidence" value="ECO:0000318"/>
    <property type="project" value="GO_Central"/>
</dbReference>
<dbReference type="GO" id="GO:0031491">
    <property type="term" value="F:nucleosome binding"/>
    <property type="evidence" value="ECO:0000318"/>
    <property type="project" value="GO_Central"/>
</dbReference>
<dbReference type="GO" id="GO:0034728">
    <property type="term" value="P:nucleosome organization"/>
    <property type="evidence" value="ECO:0000318"/>
    <property type="project" value="GO_Central"/>
</dbReference>
<dbReference type="GO" id="GO:0006368">
    <property type="term" value="P:transcription elongation by RNA polymerase II"/>
    <property type="evidence" value="ECO:0000318"/>
    <property type="project" value="GO_Central"/>
</dbReference>
<dbReference type="GO" id="GO:0140673">
    <property type="term" value="P:transcription elongation-coupled chromatin remodeling"/>
    <property type="evidence" value="ECO:0007669"/>
    <property type="project" value="InterPro"/>
</dbReference>
<dbReference type="CDD" id="cd09928">
    <property type="entry name" value="SH2_Cterm_SPT6_like"/>
    <property type="match status" value="1"/>
</dbReference>
<dbReference type="CDD" id="cd09918">
    <property type="entry name" value="SH2_Nterm_SPT6_like"/>
    <property type="match status" value="1"/>
</dbReference>
<dbReference type="FunFam" id="3.30.420.140:FF:000007">
    <property type="entry name" value="Transcription elongation factor SPT6"/>
    <property type="match status" value="1"/>
</dbReference>
<dbReference type="FunFam" id="1.10.10.2740:FF:000002">
    <property type="entry name" value="Transcription elongation factor Spt6"/>
    <property type="match status" value="1"/>
</dbReference>
<dbReference type="FunFam" id="3.30.505.10:FF:000056">
    <property type="entry name" value="Transcription elongation factor Spt6"/>
    <property type="match status" value="1"/>
</dbReference>
<dbReference type="Gene3D" id="2.40.50.140">
    <property type="entry name" value="Nucleic acid-binding proteins"/>
    <property type="match status" value="1"/>
</dbReference>
<dbReference type="Gene3D" id="1.10.10.650">
    <property type="entry name" value="RuvA domain 2-like"/>
    <property type="match status" value="1"/>
</dbReference>
<dbReference type="Gene3D" id="3.30.505.10">
    <property type="entry name" value="SH2 domain"/>
    <property type="match status" value="2"/>
</dbReference>
<dbReference type="Gene3D" id="1.10.10.2740">
    <property type="entry name" value="Spt6, Death-like domain"/>
    <property type="match status" value="1"/>
</dbReference>
<dbReference type="Gene3D" id="1.10.150.850">
    <property type="entry name" value="Spt6, helix-hairpin-helix domain"/>
    <property type="match status" value="1"/>
</dbReference>
<dbReference type="Gene3D" id="1.10.3500.10">
    <property type="entry name" value="Tex N-terminal region-like"/>
    <property type="match status" value="1"/>
</dbReference>
<dbReference type="Gene3D" id="3.30.420.140">
    <property type="entry name" value="YqgF/RNase H-like domain"/>
    <property type="match status" value="1"/>
</dbReference>
<dbReference type="InterPro" id="IPR012340">
    <property type="entry name" value="NA-bd_OB-fold"/>
</dbReference>
<dbReference type="InterPro" id="IPR012337">
    <property type="entry name" value="RNaseH-like_sf"/>
</dbReference>
<dbReference type="InterPro" id="IPR010994">
    <property type="entry name" value="RuvA_2-like"/>
</dbReference>
<dbReference type="InterPro" id="IPR000980">
    <property type="entry name" value="SH2"/>
</dbReference>
<dbReference type="InterPro" id="IPR036860">
    <property type="entry name" value="SH2_dom_sf"/>
</dbReference>
<dbReference type="InterPro" id="IPR049540">
    <property type="entry name" value="Spt6-like_S1"/>
</dbReference>
<dbReference type="InterPro" id="IPR028083">
    <property type="entry name" value="Spt6_acidic_N_dom"/>
</dbReference>
<dbReference type="InterPro" id="IPR042066">
    <property type="entry name" value="Spt6_death-like"/>
</dbReference>
<dbReference type="InterPro" id="IPR032706">
    <property type="entry name" value="Spt6_HHH"/>
</dbReference>
<dbReference type="InterPro" id="IPR028088">
    <property type="entry name" value="Spt6_HTH_DNA-bd_dom"/>
</dbReference>
<dbReference type="InterPro" id="IPR035420">
    <property type="entry name" value="Spt6_SH2"/>
</dbReference>
<dbReference type="InterPro" id="IPR035018">
    <property type="entry name" value="Spt6_SH2_C"/>
</dbReference>
<dbReference type="InterPro" id="IPR035019">
    <property type="entry name" value="Spt6_SH2_N"/>
</dbReference>
<dbReference type="InterPro" id="IPR028231">
    <property type="entry name" value="Spt6_YqgF"/>
</dbReference>
<dbReference type="InterPro" id="IPR055179">
    <property type="entry name" value="Tex-like_central_region"/>
</dbReference>
<dbReference type="InterPro" id="IPR023323">
    <property type="entry name" value="Tex-like_dom_sf"/>
</dbReference>
<dbReference type="InterPro" id="IPR023319">
    <property type="entry name" value="Tex-like_HTH_dom_sf"/>
</dbReference>
<dbReference type="InterPro" id="IPR017072">
    <property type="entry name" value="TF_Spt6"/>
</dbReference>
<dbReference type="InterPro" id="IPR037027">
    <property type="entry name" value="YqgF/RNaseH-like_dom_sf"/>
</dbReference>
<dbReference type="PANTHER" id="PTHR10145">
    <property type="entry name" value="TRANSCRIPTION ELONGATION FACTOR SPT6"/>
    <property type="match status" value="1"/>
</dbReference>
<dbReference type="PANTHER" id="PTHR10145:SF6">
    <property type="entry name" value="TRANSCRIPTION ELONGATION FACTOR SPT6"/>
    <property type="match status" value="1"/>
</dbReference>
<dbReference type="Pfam" id="PF14635">
    <property type="entry name" value="HHH_7"/>
    <property type="match status" value="1"/>
</dbReference>
<dbReference type="Pfam" id="PF14641">
    <property type="entry name" value="HTH_44"/>
    <property type="match status" value="1"/>
</dbReference>
<dbReference type="Pfam" id="PF14633">
    <property type="entry name" value="SH2_2"/>
    <property type="match status" value="1"/>
</dbReference>
<dbReference type="Pfam" id="PF14632">
    <property type="entry name" value="SPT6_acidic"/>
    <property type="match status" value="1"/>
</dbReference>
<dbReference type="Pfam" id="PF21710">
    <property type="entry name" value="Spt6_S1"/>
    <property type="match status" value="1"/>
</dbReference>
<dbReference type="Pfam" id="PF22706">
    <property type="entry name" value="Tex_central_region"/>
    <property type="match status" value="1"/>
</dbReference>
<dbReference type="Pfam" id="PF14639">
    <property type="entry name" value="YqgF"/>
    <property type="match status" value="1"/>
</dbReference>
<dbReference type="PIRSF" id="PIRSF036947">
    <property type="entry name" value="Spt6"/>
    <property type="match status" value="1"/>
</dbReference>
<dbReference type="SMART" id="SM00252">
    <property type="entry name" value="SH2"/>
    <property type="match status" value="1"/>
</dbReference>
<dbReference type="SUPFAM" id="SSF53098">
    <property type="entry name" value="Ribonuclease H-like"/>
    <property type="match status" value="1"/>
</dbReference>
<dbReference type="SUPFAM" id="SSF47781">
    <property type="entry name" value="RuvA domain 2-like"/>
    <property type="match status" value="2"/>
</dbReference>
<dbReference type="SUPFAM" id="SSF55550">
    <property type="entry name" value="SH2 domain"/>
    <property type="match status" value="1"/>
</dbReference>
<dbReference type="SUPFAM" id="SSF158832">
    <property type="entry name" value="Tex N-terminal region-like"/>
    <property type="match status" value="1"/>
</dbReference>
<gene>
    <name type="primary">SPT6</name>
    <name type="ORF">UMAG_00174</name>
</gene>
<proteinExistence type="inferred from homology"/>
<reference key="1">
    <citation type="journal article" date="2006" name="Nature">
        <title>Insights from the genome of the biotrophic fungal plant pathogen Ustilago maydis.</title>
        <authorList>
            <person name="Kaemper J."/>
            <person name="Kahmann R."/>
            <person name="Boelker M."/>
            <person name="Ma L.-J."/>
            <person name="Brefort T."/>
            <person name="Saville B.J."/>
            <person name="Banuett F."/>
            <person name="Kronstad J.W."/>
            <person name="Gold S.E."/>
            <person name="Mueller O."/>
            <person name="Perlin M.H."/>
            <person name="Woesten H.A.B."/>
            <person name="de Vries R."/>
            <person name="Ruiz-Herrera J."/>
            <person name="Reynaga-Pena C.G."/>
            <person name="Snetselaar K."/>
            <person name="McCann M."/>
            <person name="Perez-Martin J."/>
            <person name="Feldbruegge M."/>
            <person name="Basse C.W."/>
            <person name="Steinberg G."/>
            <person name="Ibeas J.I."/>
            <person name="Holloman W."/>
            <person name="Guzman P."/>
            <person name="Farman M.L."/>
            <person name="Stajich J.E."/>
            <person name="Sentandreu R."/>
            <person name="Gonzalez-Prieto J.M."/>
            <person name="Kennell J.C."/>
            <person name="Molina L."/>
            <person name="Schirawski J."/>
            <person name="Mendoza-Mendoza A."/>
            <person name="Greilinger D."/>
            <person name="Muench K."/>
            <person name="Roessel N."/>
            <person name="Scherer M."/>
            <person name="Vranes M."/>
            <person name="Ladendorf O."/>
            <person name="Vincon V."/>
            <person name="Fuchs U."/>
            <person name="Sandrock B."/>
            <person name="Meng S."/>
            <person name="Ho E.C.H."/>
            <person name="Cahill M.J."/>
            <person name="Boyce K.J."/>
            <person name="Klose J."/>
            <person name="Klosterman S.J."/>
            <person name="Deelstra H.J."/>
            <person name="Ortiz-Castellanos L."/>
            <person name="Li W."/>
            <person name="Sanchez-Alonso P."/>
            <person name="Schreier P.H."/>
            <person name="Haeuser-Hahn I."/>
            <person name="Vaupel M."/>
            <person name="Koopmann E."/>
            <person name="Friedrich G."/>
            <person name="Voss H."/>
            <person name="Schlueter T."/>
            <person name="Margolis J."/>
            <person name="Platt D."/>
            <person name="Swimmer C."/>
            <person name="Gnirke A."/>
            <person name="Chen F."/>
            <person name="Vysotskaia V."/>
            <person name="Mannhaupt G."/>
            <person name="Gueldener U."/>
            <person name="Muensterkoetter M."/>
            <person name="Haase D."/>
            <person name="Oesterheld M."/>
            <person name="Mewes H.-W."/>
            <person name="Mauceli E.W."/>
            <person name="DeCaprio D."/>
            <person name="Wade C.M."/>
            <person name="Butler J."/>
            <person name="Young S.K."/>
            <person name="Jaffe D.B."/>
            <person name="Calvo S.E."/>
            <person name="Nusbaum C."/>
            <person name="Galagan J.E."/>
            <person name="Birren B.W."/>
        </authorList>
    </citation>
    <scope>NUCLEOTIDE SEQUENCE [LARGE SCALE GENOMIC DNA]</scope>
    <source>
        <strain>DSM 14603 / FGSC 9021 / UM521</strain>
    </source>
</reference>
<reference key="2">
    <citation type="submission" date="2014-09" db="EMBL/GenBank/DDBJ databases">
        <authorList>
            <person name="Gueldener U."/>
            <person name="Muensterkoetter M."/>
            <person name="Walter M.C."/>
            <person name="Mannhaupt G."/>
            <person name="Kahmann R."/>
        </authorList>
    </citation>
    <scope>GENOME REANNOTATION</scope>
    <source>
        <strain>DSM 14603 / FGSC 9021 / UM521</strain>
    </source>
</reference>
<organism>
    <name type="scientific">Mycosarcoma maydis</name>
    <name type="common">Corn smut fungus</name>
    <name type="synonym">Ustilago maydis</name>
    <dbReference type="NCBI Taxonomy" id="5270"/>
    <lineage>
        <taxon>Eukaryota</taxon>
        <taxon>Fungi</taxon>
        <taxon>Dikarya</taxon>
        <taxon>Basidiomycota</taxon>
        <taxon>Ustilaginomycotina</taxon>
        <taxon>Ustilaginomycetes</taxon>
        <taxon>Ustilaginales</taxon>
        <taxon>Ustilaginaceae</taxon>
        <taxon>Mycosarcoma</taxon>
    </lineage>
</organism>
<name>SPT6_MYCMD</name>
<comment type="function">
    <text evidence="1">Histone H3-H4 chaperone that plays a role in maintenance of chromatin structure during RNA polymerase II transcription elongation thereby repressing transcription initiation from cryptic promoters. Mediates the reassembly of nucleosomes onto the promoters of at least a selected set of genes during repression; the nucleosome reassembly is essential for transcriptional repression. Essential for viability.</text>
</comment>
<comment type="subcellular location">
    <subcellularLocation>
        <location evidence="1">Nucleus</location>
    </subcellularLocation>
    <subcellularLocation>
        <location evidence="1">Chromosome</location>
    </subcellularLocation>
</comment>
<comment type="similarity">
    <text evidence="3">Belongs to the SPT6 family.</text>
</comment>